<name>BXB1_BOMMO</name>
<comment type="function">
    <text>Brain peptide responsible for activation of prothoracic glands to produce ecdysone in insects.</text>
</comment>
<comment type="subunit">
    <text>Heterodimer of a B chain and an A chain linked by two disulfide bonds.</text>
</comment>
<comment type="subcellular location">
    <subcellularLocation>
        <location>Secreted</location>
    </subcellularLocation>
</comment>
<comment type="miscellaneous">
    <text>Silk worm has two kinds of PTTH: 4K-PTTH and 22K-PTTH; there are many forms of 4K-PTTH.</text>
</comment>
<comment type="similarity">
    <text evidence="3">Belongs to the insulin family.</text>
</comment>
<comment type="sequence caution" evidence="3">
    <conflict type="erroneous initiation">
        <sequence resource="EMBL-CDS" id="AAA27824"/>
    </conflict>
</comment>
<reference key="1">
    <citation type="journal article" date="1989" name="Proc. Natl. Acad. Sci. U.S.A.">
        <title>Structure and organization of four clustered genes that encode bombyxin, an insulin-related brain secretory peptide of the silkmoth Bombyx mori.</title>
        <authorList>
            <person name="Kawakami A."/>
            <person name="Iwami M."/>
            <person name="Nagasawa H."/>
            <person name="Suzuki A."/>
            <person name="Ishizaki H."/>
        </authorList>
    </citation>
    <scope>NUCLEOTIDE SEQUENCE [GENOMIC DNA]</scope>
</reference>
<accession>P26733</accession>
<protein>
    <recommendedName>
        <fullName>Bombyxin B-1</fullName>
        <shortName>BBX-B1</shortName>
    </recommendedName>
    <alternativeName>
        <fullName>4K-prothoracicotropic hormone</fullName>
        <shortName>4K-PTTH</shortName>
    </alternativeName>
    <component>
        <recommendedName>
            <fullName>Bombyxin B-1 B chain</fullName>
        </recommendedName>
    </component>
    <component>
        <recommendedName>
            <fullName>Bombyxin B-1 A chain</fullName>
        </recommendedName>
    </component>
</protein>
<keyword id="KW-0165">Cleavage on pair of basic residues</keyword>
<keyword id="KW-1015">Disulfide bond</keyword>
<keyword id="KW-0372">Hormone</keyword>
<keyword id="KW-1185">Reference proteome</keyword>
<keyword id="KW-0964">Secreted</keyword>
<keyword id="KW-0732">Signal</keyword>
<proteinExistence type="inferred from homology"/>
<feature type="signal peptide" evidence="2">
    <location>
        <begin position="1"/>
        <end position="19"/>
    </location>
</feature>
<feature type="peptide" id="PRO_0000015989" description="Bombyxin B-1 B chain">
    <location>
        <begin position="20"/>
        <end position="45"/>
    </location>
</feature>
<feature type="propeptide" id="PRO_0000015990" description="C peptide like">
    <location>
        <begin position="48"/>
        <end position="66"/>
    </location>
</feature>
<feature type="peptide" id="PRO_0000015991" description="Bombyxin B-1 A chain">
    <location>
        <begin position="69"/>
        <end position="89"/>
    </location>
</feature>
<feature type="disulfide bond" description="Interchain (between B and A chains)" evidence="1">
    <location>
        <begin position="29"/>
        <end position="75"/>
    </location>
</feature>
<feature type="disulfide bond" description="Interchain (between B and A chains)" evidence="1">
    <location>
        <begin position="41"/>
        <end position="88"/>
    </location>
</feature>
<feature type="disulfide bond" evidence="1">
    <location>
        <begin position="74"/>
        <end position="79"/>
    </location>
</feature>
<gene>
    <name type="primary">BBXB1</name>
</gene>
<sequence length="89" mass="9945">MKTSVMFMLVIVISLMCSGEAQEVARTYCGRHLADTLADLCFGVEKRGGAQYAPYFWTRQYLGSRGKRGVVDECCFRPCTLDVLLSYCG</sequence>
<evidence type="ECO:0000250" key="1"/>
<evidence type="ECO:0000255" key="2"/>
<evidence type="ECO:0000305" key="3"/>
<organism>
    <name type="scientific">Bombyx mori</name>
    <name type="common">Silk moth</name>
    <dbReference type="NCBI Taxonomy" id="7091"/>
    <lineage>
        <taxon>Eukaryota</taxon>
        <taxon>Metazoa</taxon>
        <taxon>Ecdysozoa</taxon>
        <taxon>Arthropoda</taxon>
        <taxon>Hexapoda</taxon>
        <taxon>Insecta</taxon>
        <taxon>Pterygota</taxon>
        <taxon>Neoptera</taxon>
        <taxon>Endopterygota</taxon>
        <taxon>Lepidoptera</taxon>
        <taxon>Glossata</taxon>
        <taxon>Ditrysia</taxon>
        <taxon>Bombycoidea</taxon>
        <taxon>Bombycidae</taxon>
        <taxon>Bombycinae</taxon>
        <taxon>Bombyx</taxon>
    </lineage>
</organism>
<dbReference type="EMBL" id="M26068">
    <property type="protein sequence ID" value="AAA27824.1"/>
    <property type="status" value="ALT_INIT"/>
    <property type="molecule type" value="Genomic_DNA"/>
</dbReference>
<dbReference type="PIR" id="A21182">
    <property type="entry name" value="A21182"/>
</dbReference>
<dbReference type="PIR" id="C41391">
    <property type="entry name" value="IPMTB1"/>
</dbReference>
<dbReference type="RefSeq" id="NP_001121791.1">
    <property type="nucleotide sequence ID" value="NM_001128319.1"/>
</dbReference>
<dbReference type="SMR" id="P26733"/>
<dbReference type="FunCoup" id="P26733">
    <property type="interactions" value="162"/>
</dbReference>
<dbReference type="PaxDb" id="7091-BGIBMGA014498-TA"/>
<dbReference type="GeneID" id="100169719"/>
<dbReference type="KEGG" id="bmor:100169719"/>
<dbReference type="CTD" id="100169719"/>
<dbReference type="eggNOG" id="ENOG502SESX">
    <property type="taxonomic scope" value="Eukaryota"/>
</dbReference>
<dbReference type="HOGENOM" id="CLU_125164_2_0_1"/>
<dbReference type="InParanoid" id="P26733"/>
<dbReference type="OrthoDB" id="493443at7088"/>
<dbReference type="Proteomes" id="UP000005204">
    <property type="component" value="Unassembled WGS sequence"/>
</dbReference>
<dbReference type="GO" id="GO:0005615">
    <property type="term" value="C:extracellular space"/>
    <property type="evidence" value="ECO:0007669"/>
    <property type="project" value="InterPro"/>
</dbReference>
<dbReference type="GO" id="GO:0008083">
    <property type="term" value="F:growth factor activity"/>
    <property type="evidence" value="ECO:0007669"/>
    <property type="project" value="InterPro"/>
</dbReference>
<dbReference type="GO" id="GO:0005179">
    <property type="term" value="F:hormone activity"/>
    <property type="evidence" value="ECO:0007669"/>
    <property type="project" value="UniProtKB-KW"/>
</dbReference>
<dbReference type="GO" id="GO:0005159">
    <property type="term" value="F:insulin-like growth factor receptor binding"/>
    <property type="evidence" value="ECO:0007669"/>
    <property type="project" value="TreeGrafter"/>
</dbReference>
<dbReference type="GO" id="GO:0043539">
    <property type="term" value="F:protein serine/threonine kinase activator activity"/>
    <property type="evidence" value="ECO:0007669"/>
    <property type="project" value="TreeGrafter"/>
</dbReference>
<dbReference type="GO" id="GO:0042104">
    <property type="term" value="P:positive regulation of activated T cell proliferation"/>
    <property type="evidence" value="ECO:0007669"/>
    <property type="project" value="TreeGrafter"/>
</dbReference>
<dbReference type="GO" id="GO:0046628">
    <property type="term" value="P:positive regulation of insulin receptor signaling pathway"/>
    <property type="evidence" value="ECO:0007669"/>
    <property type="project" value="TreeGrafter"/>
</dbReference>
<dbReference type="GO" id="GO:0043410">
    <property type="term" value="P:positive regulation of MAPK cascade"/>
    <property type="evidence" value="ECO:0007669"/>
    <property type="project" value="TreeGrafter"/>
</dbReference>
<dbReference type="GO" id="GO:0045944">
    <property type="term" value="P:positive regulation of transcription by RNA polymerase II"/>
    <property type="evidence" value="ECO:0007669"/>
    <property type="project" value="TreeGrafter"/>
</dbReference>
<dbReference type="GO" id="GO:1905564">
    <property type="term" value="P:positive regulation of vascular endothelial cell proliferation"/>
    <property type="evidence" value="ECO:0007669"/>
    <property type="project" value="TreeGrafter"/>
</dbReference>
<dbReference type="GO" id="GO:0051147">
    <property type="term" value="P:regulation of muscle cell differentiation"/>
    <property type="evidence" value="ECO:0007669"/>
    <property type="project" value="TreeGrafter"/>
</dbReference>
<dbReference type="CDD" id="cd04366">
    <property type="entry name" value="IlGF_insulin_bombyxin_like"/>
    <property type="match status" value="1"/>
</dbReference>
<dbReference type="Gene3D" id="1.10.100.10">
    <property type="entry name" value="Insulin-like"/>
    <property type="match status" value="1"/>
</dbReference>
<dbReference type="InterPro" id="IPR017097">
    <property type="entry name" value="Bombyxin"/>
</dbReference>
<dbReference type="InterPro" id="IPR027285">
    <property type="entry name" value="Bombyxin_B"/>
</dbReference>
<dbReference type="InterPro" id="IPR016179">
    <property type="entry name" value="Insulin-like"/>
</dbReference>
<dbReference type="InterPro" id="IPR036438">
    <property type="entry name" value="Insulin-like_sf"/>
</dbReference>
<dbReference type="InterPro" id="IPR022353">
    <property type="entry name" value="Insulin_CS"/>
</dbReference>
<dbReference type="InterPro" id="IPR022352">
    <property type="entry name" value="Insulin_family"/>
</dbReference>
<dbReference type="PANTHER" id="PTHR46886">
    <property type="entry name" value="INSULIN-LIKE GROWTH FACTOR II"/>
    <property type="match status" value="1"/>
</dbReference>
<dbReference type="PANTHER" id="PTHR46886:SF1">
    <property type="entry name" value="INSULIN-LIKE GROWTH FACTOR II"/>
    <property type="match status" value="1"/>
</dbReference>
<dbReference type="Pfam" id="PF00049">
    <property type="entry name" value="Insulin"/>
    <property type="match status" value="1"/>
</dbReference>
<dbReference type="PIRSF" id="PIRSF037038">
    <property type="entry name" value="Bombyxin"/>
    <property type="match status" value="1"/>
</dbReference>
<dbReference type="PIRSF" id="PIRSF500313">
    <property type="entry name" value="Bombyxin_B"/>
    <property type="match status" value="1"/>
</dbReference>
<dbReference type="PRINTS" id="PR02003">
    <property type="entry name" value="BOMBYXIN"/>
</dbReference>
<dbReference type="PRINTS" id="PR00276">
    <property type="entry name" value="INSULINFAMLY"/>
</dbReference>
<dbReference type="SMART" id="SM00078">
    <property type="entry name" value="IlGF"/>
    <property type="match status" value="1"/>
</dbReference>
<dbReference type="SUPFAM" id="SSF56994">
    <property type="entry name" value="Insulin-like"/>
    <property type="match status" value="1"/>
</dbReference>
<dbReference type="PROSITE" id="PS00262">
    <property type="entry name" value="INSULIN"/>
    <property type="match status" value="1"/>
</dbReference>